<evidence type="ECO:0000255" key="1">
    <source>
        <dbReference type="HAMAP-Rule" id="MF_00531"/>
    </source>
</evidence>
<evidence type="ECO:0000305" key="2"/>
<gene>
    <name evidence="1" type="primary">rpsS</name>
    <name type="ordered locus">RMA_1036</name>
</gene>
<organism>
    <name type="scientific">Rickettsia massiliae (strain Mtu5)</name>
    <dbReference type="NCBI Taxonomy" id="416276"/>
    <lineage>
        <taxon>Bacteria</taxon>
        <taxon>Pseudomonadati</taxon>
        <taxon>Pseudomonadota</taxon>
        <taxon>Alphaproteobacteria</taxon>
        <taxon>Rickettsiales</taxon>
        <taxon>Rickettsiaceae</taxon>
        <taxon>Rickettsieae</taxon>
        <taxon>Rickettsia</taxon>
        <taxon>spotted fever group</taxon>
    </lineage>
</organism>
<accession>A8F2E3</accession>
<feature type="chain" id="PRO_0000354298" description="Small ribosomal subunit protein uS19">
    <location>
        <begin position="1"/>
        <end position="92"/>
    </location>
</feature>
<reference key="1">
    <citation type="journal article" date="2007" name="Genome Res.">
        <title>Lateral gene transfer between obligate intracellular bacteria: evidence from the Rickettsia massiliae genome.</title>
        <authorList>
            <person name="Blanc G."/>
            <person name="Ogata H."/>
            <person name="Robert C."/>
            <person name="Audic S."/>
            <person name="Claverie J.-M."/>
            <person name="Raoult D."/>
        </authorList>
    </citation>
    <scope>NUCLEOTIDE SEQUENCE [LARGE SCALE GENOMIC DNA]</scope>
    <source>
        <strain>Mtu5</strain>
    </source>
</reference>
<proteinExistence type="inferred from homology"/>
<dbReference type="EMBL" id="CP000683">
    <property type="protein sequence ID" value="ABV85079.1"/>
    <property type="status" value="ALT_INIT"/>
    <property type="molecule type" value="Genomic_DNA"/>
</dbReference>
<dbReference type="RefSeq" id="WP_008580964.1">
    <property type="nucleotide sequence ID" value="NC_009900.1"/>
</dbReference>
<dbReference type="SMR" id="A8F2E3"/>
<dbReference type="KEGG" id="rms:RMA_1036"/>
<dbReference type="HOGENOM" id="CLU_144911_0_1_5"/>
<dbReference type="Proteomes" id="UP000001311">
    <property type="component" value="Chromosome"/>
</dbReference>
<dbReference type="GO" id="GO:0005737">
    <property type="term" value="C:cytoplasm"/>
    <property type="evidence" value="ECO:0007669"/>
    <property type="project" value="UniProtKB-ARBA"/>
</dbReference>
<dbReference type="GO" id="GO:0015935">
    <property type="term" value="C:small ribosomal subunit"/>
    <property type="evidence" value="ECO:0007669"/>
    <property type="project" value="InterPro"/>
</dbReference>
<dbReference type="GO" id="GO:0019843">
    <property type="term" value="F:rRNA binding"/>
    <property type="evidence" value="ECO:0007669"/>
    <property type="project" value="UniProtKB-UniRule"/>
</dbReference>
<dbReference type="GO" id="GO:0003735">
    <property type="term" value="F:structural constituent of ribosome"/>
    <property type="evidence" value="ECO:0007669"/>
    <property type="project" value="InterPro"/>
</dbReference>
<dbReference type="GO" id="GO:0000028">
    <property type="term" value="P:ribosomal small subunit assembly"/>
    <property type="evidence" value="ECO:0007669"/>
    <property type="project" value="TreeGrafter"/>
</dbReference>
<dbReference type="GO" id="GO:0006412">
    <property type="term" value="P:translation"/>
    <property type="evidence" value="ECO:0007669"/>
    <property type="project" value="UniProtKB-UniRule"/>
</dbReference>
<dbReference type="FunFam" id="3.30.860.10:FF:000001">
    <property type="entry name" value="30S ribosomal protein S19"/>
    <property type="match status" value="1"/>
</dbReference>
<dbReference type="Gene3D" id="3.30.860.10">
    <property type="entry name" value="30s Ribosomal Protein S19, Chain A"/>
    <property type="match status" value="1"/>
</dbReference>
<dbReference type="HAMAP" id="MF_00531">
    <property type="entry name" value="Ribosomal_uS19"/>
    <property type="match status" value="1"/>
</dbReference>
<dbReference type="InterPro" id="IPR002222">
    <property type="entry name" value="Ribosomal_uS19"/>
</dbReference>
<dbReference type="InterPro" id="IPR005732">
    <property type="entry name" value="Ribosomal_uS19_bac-type"/>
</dbReference>
<dbReference type="InterPro" id="IPR020934">
    <property type="entry name" value="Ribosomal_uS19_CS"/>
</dbReference>
<dbReference type="InterPro" id="IPR023575">
    <property type="entry name" value="Ribosomal_uS19_SF"/>
</dbReference>
<dbReference type="NCBIfam" id="TIGR01050">
    <property type="entry name" value="rpsS_bact"/>
    <property type="match status" value="1"/>
</dbReference>
<dbReference type="PANTHER" id="PTHR11880">
    <property type="entry name" value="RIBOSOMAL PROTEIN S19P FAMILY MEMBER"/>
    <property type="match status" value="1"/>
</dbReference>
<dbReference type="PANTHER" id="PTHR11880:SF8">
    <property type="entry name" value="SMALL RIBOSOMAL SUBUNIT PROTEIN US19M"/>
    <property type="match status" value="1"/>
</dbReference>
<dbReference type="Pfam" id="PF00203">
    <property type="entry name" value="Ribosomal_S19"/>
    <property type="match status" value="1"/>
</dbReference>
<dbReference type="PIRSF" id="PIRSF002144">
    <property type="entry name" value="Ribosomal_S19"/>
    <property type="match status" value="1"/>
</dbReference>
<dbReference type="PRINTS" id="PR00975">
    <property type="entry name" value="RIBOSOMALS19"/>
</dbReference>
<dbReference type="SUPFAM" id="SSF54570">
    <property type="entry name" value="Ribosomal protein S19"/>
    <property type="match status" value="1"/>
</dbReference>
<dbReference type="PROSITE" id="PS00323">
    <property type="entry name" value="RIBOSOMAL_S19"/>
    <property type="match status" value="1"/>
</dbReference>
<name>RS19_RICM5</name>
<keyword id="KW-0687">Ribonucleoprotein</keyword>
<keyword id="KW-0689">Ribosomal protein</keyword>
<keyword id="KW-0694">RNA-binding</keyword>
<keyword id="KW-0699">rRNA-binding</keyword>
<sequence>MARSIWKGPFVDGYLIKKVQKLMESGKSEMIKTWSRRSTILPIFVGFTFSVHNGNKFIPVSVNEEMVGRKLGEFAPTRTFHGHGADKKVKRK</sequence>
<comment type="function">
    <text evidence="1">Protein S19 forms a complex with S13 that binds strongly to the 16S ribosomal RNA.</text>
</comment>
<comment type="similarity">
    <text evidence="1">Belongs to the universal ribosomal protein uS19 family.</text>
</comment>
<comment type="sequence caution" evidence="2">
    <conflict type="erroneous initiation">
        <sequence resource="EMBL-CDS" id="ABV85079"/>
    </conflict>
</comment>
<protein>
    <recommendedName>
        <fullName evidence="1">Small ribosomal subunit protein uS19</fullName>
    </recommendedName>
    <alternativeName>
        <fullName evidence="2">30S ribosomal protein S19</fullName>
    </alternativeName>
</protein>